<proteinExistence type="evidence at protein level"/>
<accession>P20586</accession>
<sequence length="394" mass="44324">MKTQVAIIGAGPSGLLLGQLLHKAGIDNVILERQTPDYVLGRIRAGVLEQGMVDLLREAGVDRRMARDGLVHEGVEIAFAGQRRRIDLKRLSGGKTVTVYGQTEVTRDLMEAREACGATTVYQAAEVRLHDLQGERPYVTFERDGERLRLDCDYIAGCDGFHGISRQSIPAERLKVFERVYPFGWLGLLADTPPVSHELIYANHPRGFALCSQRSATRSRYYVQVPLSEKVEDWSDERFWTELKARLPSEVAEKLVTGPSLEKSIAPLRSFVVEPMQHGRLFLAGDAAHIVPPTGAKGLNLAASDVSTLYRLLLKAYREGRGELLERYSAICLRRIWKAERFSWWMTSVLHRFPDTDAFSQRIQQTELEYYLGSEAGLATIAENYVGLPYEEIE</sequence>
<dbReference type="EC" id="1.14.13.2" evidence="4"/>
<dbReference type="EMBL" id="M23173">
    <property type="protein sequence ID" value="AAA88455.1"/>
    <property type="molecule type" value="Genomic_DNA"/>
</dbReference>
<dbReference type="EMBL" id="AE004091">
    <property type="protein sequence ID" value="AAG03636.1"/>
    <property type="molecule type" value="Genomic_DNA"/>
</dbReference>
<dbReference type="PIR" id="JT0384">
    <property type="entry name" value="WHPSBA"/>
</dbReference>
<dbReference type="RefSeq" id="NP_248938.1">
    <property type="nucleotide sequence ID" value="NC_002516.2"/>
</dbReference>
<dbReference type="RefSeq" id="WP_003112685.1">
    <property type="nucleotide sequence ID" value="NZ_QZGE01000024.1"/>
</dbReference>
<dbReference type="PDB" id="1D7L">
    <property type="method" value="X-ray"/>
    <property type="resolution" value="2.20 A"/>
    <property type="chains" value="A=1-394"/>
</dbReference>
<dbReference type="PDB" id="1DOB">
    <property type="method" value="X-ray"/>
    <property type="resolution" value="2.00 A"/>
    <property type="chains" value="A=1-394"/>
</dbReference>
<dbReference type="PDB" id="1DOC">
    <property type="method" value="X-ray"/>
    <property type="resolution" value="2.00 A"/>
    <property type="chains" value="A=1-394"/>
</dbReference>
<dbReference type="PDB" id="1DOD">
    <property type="method" value="X-ray"/>
    <property type="resolution" value="2.10 A"/>
    <property type="chains" value="A=1-394"/>
</dbReference>
<dbReference type="PDB" id="1DOE">
    <property type="method" value="X-ray"/>
    <property type="resolution" value="2.30 A"/>
    <property type="chains" value="A=1-394"/>
</dbReference>
<dbReference type="PDB" id="1IUS">
    <property type="method" value="X-ray"/>
    <property type="resolution" value="2.20 A"/>
    <property type="chains" value="A=1-394"/>
</dbReference>
<dbReference type="PDB" id="1IUT">
    <property type="method" value="X-ray"/>
    <property type="resolution" value="2.00 A"/>
    <property type="chains" value="A=1-394"/>
</dbReference>
<dbReference type="PDB" id="1IUU">
    <property type="method" value="X-ray"/>
    <property type="resolution" value="2.00 A"/>
    <property type="chains" value="A=1-394"/>
</dbReference>
<dbReference type="PDB" id="1IUV">
    <property type="method" value="X-ray"/>
    <property type="resolution" value="2.50 A"/>
    <property type="chains" value="A=1-394"/>
</dbReference>
<dbReference type="PDB" id="1IUW">
    <property type="method" value="X-ray"/>
    <property type="resolution" value="2.00 A"/>
    <property type="chains" value="A=1-394"/>
</dbReference>
<dbReference type="PDB" id="1IUX">
    <property type="method" value="X-ray"/>
    <property type="resolution" value="2.00 A"/>
    <property type="chains" value="A=1-394"/>
</dbReference>
<dbReference type="PDB" id="1K0I">
    <property type="method" value="X-ray"/>
    <property type="resolution" value="1.80 A"/>
    <property type="chains" value="A=1-394"/>
</dbReference>
<dbReference type="PDB" id="1K0J">
    <property type="method" value="X-ray"/>
    <property type="resolution" value="2.20 A"/>
    <property type="chains" value="A=1-394"/>
</dbReference>
<dbReference type="PDB" id="1K0L">
    <property type="method" value="X-ray"/>
    <property type="resolution" value="2.00 A"/>
    <property type="chains" value="A=1-394"/>
</dbReference>
<dbReference type="PDB" id="1PXA">
    <property type="method" value="X-ray"/>
    <property type="resolution" value="2.30 A"/>
    <property type="chains" value="A=1-394"/>
</dbReference>
<dbReference type="PDB" id="1PXB">
    <property type="method" value="X-ray"/>
    <property type="resolution" value="2.30 A"/>
    <property type="chains" value="A=1-394"/>
</dbReference>
<dbReference type="PDB" id="1PXC">
    <property type="method" value="X-ray"/>
    <property type="resolution" value="2.10 A"/>
    <property type="chains" value="A=1-394"/>
</dbReference>
<dbReference type="PDB" id="1YKJ">
    <property type="method" value="X-ray"/>
    <property type="resolution" value="2.00 A"/>
    <property type="chains" value="A/B=1-394"/>
</dbReference>
<dbReference type="PDB" id="6JU1">
    <property type="method" value="X-ray"/>
    <property type="resolution" value="1.60 A"/>
    <property type="chains" value="A=1-394"/>
</dbReference>
<dbReference type="PDB" id="8Y2S">
    <property type="method" value="X-ray"/>
    <property type="resolution" value="2.00 A"/>
    <property type="chains" value="A=1-394"/>
</dbReference>
<dbReference type="PDBsum" id="1D7L"/>
<dbReference type="PDBsum" id="1DOB"/>
<dbReference type="PDBsum" id="1DOC"/>
<dbReference type="PDBsum" id="1DOD"/>
<dbReference type="PDBsum" id="1DOE"/>
<dbReference type="PDBsum" id="1IUS"/>
<dbReference type="PDBsum" id="1IUT"/>
<dbReference type="PDBsum" id="1IUU"/>
<dbReference type="PDBsum" id="1IUV"/>
<dbReference type="PDBsum" id="1IUW"/>
<dbReference type="PDBsum" id="1IUX"/>
<dbReference type="PDBsum" id="1K0I"/>
<dbReference type="PDBsum" id="1K0J"/>
<dbReference type="PDBsum" id="1K0L"/>
<dbReference type="PDBsum" id="1PXA"/>
<dbReference type="PDBsum" id="1PXB"/>
<dbReference type="PDBsum" id="1PXC"/>
<dbReference type="PDBsum" id="1YKJ"/>
<dbReference type="PDBsum" id="6JU1"/>
<dbReference type="PDBsum" id="8Y2S"/>
<dbReference type="SMR" id="P20586"/>
<dbReference type="STRING" id="208964.PA0247"/>
<dbReference type="DrugBank" id="DB02839">
    <property type="generic name" value="2,4-Dihydroxybenzoic Acid"/>
</dbReference>
<dbReference type="DrugBank" id="DB04242">
    <property type="generic name" value="4-hydroxybenzoic acid"/>
</dbReference>
<dbReference type="DrugBank" id="DB03482">
    <property type="generic name" value="8-demethyl-8-dimethylamino-flavin-adenine-dinucleotide"/>
</dbReference>
<dbReference type="DrugBank" id="DB02362">
    <property type="generic name" value="Aminobenzoic acid"/>
</dbReference>
<dbReference type="DrugBank" id="DB03147">
    <property type="generic name" value="Flavin adenine dinucleotide"/>
</dbReference>
<dbReference type="PaxDb" id="208964-PA0247"/>
<dbReference type="GeneID" id="882128"/>
<dbReference type="KEGG" id="pae:PA0247"/>
<dbReference type="PATRIC" id="fig|208964.12.peg.257"/>
<dbReference type="PseudoCAP" id="PA0247"/>
<dbReference type="HOGENOM" id="CLU_057691_0_0_6"/>
<dbReference type="InParanoid" id="P20586"/>
<dbReference type="OrthoDB" id="8672648at2"/>
<dbReference type="PhylomeDB" id="P20586"/>
<dbReference type="BioCyc" id="PAER208964:G1FZ6-249-MONOMER"/>
<dbReference type="BRENDA" id="1.14.13.2">
    <property type="organism ID" value="5087"/>
</dbReference>
<dbReference type="UniPathway" id="UPA00156">
    <property type="reaction ID" value="UER00257"/>
</dbReference>
<dbReference type="EvolutionaryTrace" id="P20586"/>
<dbReference type="Proteomes" id="UP000002438">
    <property type="component" value="Chromosome"/>
</dbReference>
<dbReference type="GO" id="GO:0106356">
    <property type="term" value="F:4-hydroxybenzoate 3-monooxygenase (NADPH) activity"/>
    <property type="evidence" value="ECO:0007669"/>
    <property type="project" value="RHEA"/>
</dbReference>
<dbReference type="GO" id="GO:0018659">
    <property type="term" value="F:4-hydroxybenzoate 3-monooxygenase activity"/>
    <property type="evidence" value="ECO:0000314"/>
    <property type="project" value="UniProtKB"/>
</dbReference>
<dbReference type="GO" id="GO:0071949">
    <property type="term" value="F:FAD binding"/>
    <property type="evidence" value="ECO:0000314"/>
    <property type="project" value="UniProtKB"/>
</dbReference>
<dbReference type="GO" id="GO:0050660">
    <property type="term" value="F:flavin adenine dinucleotide binding"/>
    <property type="evidence" value="ECO:0000314"/>
    <property type="project" value="UniProtKB"/>
</dbReference>
<dbReference type="GO" id="GO:0016491">
    <property type="term" value="F:oxidoreductase activity"/>
    <property type="evidence" value="ECO:0000318"/>
    <property type="project" value="GO_Central"/>
</dbReference>
<dbReference type="GO" id="GO:0043640">
    <property type="term" value="P:benzoate catabolic process via hydroxylation"/>
    <property type="evidence" value="ECO:0007669"/>
    <property type="project" value="UniProtKB-UniPathway"/>
</dbReference>
<dbReference type="Gene3D" id="3.30.9.10">
    <property type="entry name" value="D-Amino Acid Oxidase, subunit A, domain 2"/>
    <property type="match status" value="1"/>
</dbReference>
<dbReference type="Gene3D" id="3.50.50.60">
    <property type="entry name" value="FAD/NAD(P)-binding domain"/>
    <property type="match status" value="1"/>
</dbReference>
<dbReference type="InterPro" id="IPR002938">
    <property type="entry name" value="FAD-bd"/>
</dbReference>
<dbReference type="InterPro" id="IPR036188">
    <property type="entry name" value="FAD/NAD-bd_sf"/>
</dbReference>
<dbReference type="InterPro" id="IPR012733">
    <property type="entry name" value="HB_mOase"/>
</dbReference>
<dbReference type="InterPro" id="IPR050641">
    <property type="entry name" value="RIFMO-like"/>
</dbReference>
<dbReference type="NCBIfam" id="TIGR02360">
    <property type="entry name" value="pbenz_hydroxyl"/>
    <property type="match status" value="1"/>
</dbReference>
<dbReference type="NCBIfam" id="NF006091">
    <property type="entry name" value="PRK08243.1"/>
    <property type="match status" value="1"/>
</dbReference>
<dbReference type="PANTHER" id="PTHR43004:SF3">
    <property type="entry name" value="P-HYDROXYBENZOATE HYDROXYLASE"/>
    <property type="match status" value="1"/>
</dbReference>
<dbReference type="PANTHER" id="PTHR43004">
    <property type="entry name" value="TRK SYSTEM POTASSIUM UPTAKE PROTEIN"/>
    <property type="match status" value="1"/>
</dbReference>
<dbReference type="Pfam" id="PF01494">
    <property type="entry name" value="FAD_binding_3"/>
    <property type="match status" value="1"/>
</dbReference>
<dbReference type="PRINTS" id="PR00420">
    <property type="entry name" value="RNGMNOXGNASE"/>
</dbReference>
<dbReference type="SUPFAM" id="SSF54373">
    <property type="entry name" value="FAD-linked reductases, C-terminal domain"/>
    <property type="match status" value="1"/>
</dbReference>
<dbReference type="SUPFAM" id="SSF51905">
    <property type="entry name" value="FAD/NAD(P)-binding domain"/>
    <property type="match status" value="1"/>
</dbReference>
<comment type="function">
    <text evidence="1 2 3 4 5 6 7">Catalyzes the incorporation of an atom of dioxygen into p-hydroxybenzoate (p-OHB) to form 3,4-dihydroxybenzoate (3,4DOHB). The reaction occurs in two parts: reduction of the flavin adenine dinucleotide (FAD) in the enzyme by reduced nicotinamide adenine dinucleotide phosphate (NADPH) in response to binding p-hydroxybenzoate to the enzyme and oxidation of reduced FAD with oxygen to form a hydroperoxide, which then oxygenates p-hydroxybenzoate.</text>
</comment>
<comment type="catalytic activity">
    <reaction evidence="4">
        <text>4-hydroxybenzoate + NADPH + O2 + H(+) = 3,4-dihydroxybenzoate + NADP(+) + H2O</text>
        <dbReference type="Rhea" id="RHEA:19477"/>
        <dbReference type="ChEBI" id="CHEBI:15377"/>
        <dbReference type="ChEBI" id="CHEBI:15378"/>
        <dbReference type="ChEBI" id="CHEBI:15379"/>
        <dbReference type="ChEBI" id="CHEBI:17879"/>
        <dbReference type="ChEBI" id="CHEBI:36241"/>
        <dbReference type="ChEBI" id="CHEBI:57783"/>
        <dbReference type="ChEBI" id="CHEBI:58349"/>
        <dbReference type="EC" id="1.14.13.2"/>
    </reaction>
</comment>
<comment type="cofactor">
    <cofactor evidence="2 3 4 5 6 7">
        <name>FAD</name>
        <dbReference type="ChEBI" id="CHEBI:57692"/>
    </cofactor>
    <text evidence="2 3 5 6 7">Binds 1 FAD per subunit.</text>
</comment>
<comment type="pathway">
    <text evidence="10">Aromatic compound metabolism; benzoate degradation via hydroxylation; 3,4-dihydroxybenzoate from benzoate: step 2/2.</text>
</comment>
<comment type="subunit">
    <text evidence="1 2 3 5 6 7">Homodimer.</text>
</comment>
<comment type="miscellaneous">
    <text evidence="7">Controlled catalysis is achieved by movement of the flavin and protein between three conformations: in, out and open. The open conformation is important for substrate binding and product release, the in conformation for reaction with oxygen and hydroxylation, and the out conformation for the reduction of FAD by NADPH.</text>
</comment>
<comment type="similarity">
    <text evidence="10">Belongs to the aromatic-ring hydroxylase family.</text>
</comment>
<evidence type="ECO:0000269" key="1">
    <source>
    </source>
</evidence>
<evidence type="ECO:0000269" key="2">
    <source>
    </source>
</evidence>
<evidence type="ECO:0000269" key="3">
    <source>
    </source>
</evidence>
<evidence type="ECO:0000269" key="4">
    <source>
    </source>
</evidence>
<evidence type="ECO:0000269" key="5">
    <source>
    </source>
</evidence>
<evidence type="ECO:0000269" key="6">
    <source>
    </source>
</evidence>
<evidence type="ECO:0000269" key="7">
    <source>
    </source>
</evidence>
<evidence type="ECO:0000303" key="8">
    <source>
    </source>
</evidence>
<evidence type="ECO:0000303" key="9">
    <source>
    </source>
</evidence>
<evidence type="ECO:0000305" key="10"/>
<evidence type="ECO:0007829" key="11">
    <source>
        <dbReference type="PDB" id="6JU1"/>
    </source>
</evidence>
<protein>
    <recommendedName>
        <fullName evidence="8">p-hydroxybenzoate hydroxylase</fullName>
        <shortName evidence="8">PHBH</shortName>
        <ecNumber evidence="4">1.14.13.2</ecNumber>
    </recommendedName>
    <alternativeName>
        <fullName evidence="10">4-hydroxybenzoate 3-monooxygenase</fullName>
    </alternativeName>
</protein>
<keyword id="KW-0002">3D-structure</keyword>
<keyword id="KW-0058">Aromatic hydrocarbons catabolism</keyword>
<keyword id="KW-0274">FAD</keyword>
<keyword id="KW-0285">Flavoprotein</keyword>
<keyword id="KW-0503">Monooxygenase</keyword>
<keyword id="KW-0521">NADP</keyword>
<keyword id="KW-0560">Oxidoreductase</keyword>
<keyword id="KW-1185">Reference proteome</keyword>
<reference key="1">
    <citation type="journal article" date="1988" name="Gene">
        <title>Sequence and organization of pobA, the gene coding for p-hydroxybenzoate hydroxylase, an inducible enzyme from Pseudomonas aeruginosa.</title>
        <authorList>
            <person name="Entsch B."/>
            <person name="Nan Y."/>
            <person name="Weaich K."/>
            <person name="Scott K.F."/>
        </authorList>
    </citation>
    <scope>NUCLEOTIDE SEQUENCE [GENOMIC DNA]</scope>
</reference>
<reference key="2">
    <citation type="journal article" date="2000" name="Nature">
        <title>Complete genome sequence of Pseudomonas aeruginosa PAO1, an opportunistic pathogen.</title>
        <authorList>
            <person name="Stover C.K."/>
            <person name="Pham X.-Q.T."/>
            <person name="Erwin A.L."/>
            <person name="Mizoguchi S.D."/>
            <person name="Warrener P."/>
            <person name="Hickey M.J."/>
            <person name="Brinkman F.S.L."/>
            <person name="Hufnagle W.O."/>
            <person name="Kowalik D.J."/>
            <person name="Lagrou M."/>
            <person name="Garber R.L."/>
            <person name="Goltry L."/>
            <person name="Tolentino E."/>
            <person name="Westbrock-Wadman S."/>
            <person name="Yuan Y."/>
            <person name="Brody L.L."/>
            <person name="Coulter S.N."/>
            <person name="Folger K.R."/>
            <person name="Kas A."/>
            <person name="Larbig K."/>
            <person name="Lim R.M."/>
            <person name="Smith K.A."/>
            <person name="Spencer D.H."/>
            <person name="Wong G.K.-S."/>
            <person name="Wu Z."/>
            <person name="Paulsen I.T."/>
            <person name="Reizer J."/>
            <person name="Saier M.H. Jr."/>
            <person name="Hancock R.E.W."/>
            <person name="Lory S."/>
            <person name="Olson M.V."/>
        </authorList>
    </citation>
    <scope>NUCLEOTIDE SEQUENCE [LARGE SCALE GENOMIC DNA]</scope>
    <source>
        <strain>ATCC 15692 / DSM 22644 / CIP 104116 / JCM 14847 / LMG 12228 / 1C / PRS 101 / PAO1</strain>
    </source>
</reference>
<reference key="3">
    <citation type="journal article" date="1991" name="J. Biol. Chem.">
        <title>Catalytic function of tyrosine residues in para-hydroxybenzoate hydroxylase as determined by the study of site-directed mutants.</title>
        <authorList>
            <person name="Entsch B."/>
            <person name="Palfey B.A."/>
            <person name="Ballou D.P."/>
            <person name="Massey V."/>
        </authorList>
    </citation>
    <scope>FUNCTION</scope>
    <scope>CATALYTIC ACTIVITY</scope>
    <scope>MUTAGENESIS OF TYR-201 AND TYR-385</scope>
    <scope>COFACTOR</scope>
</reference>
<reference key="4">
    <citation type="journal article" date="1994" name="Biochemistry">
        <title>Crystal structures of mutant Pseudomonas aeruginosa p-hydroxybenzoate hydroxylases: the Tyr201Phe, Tyr385Phe, and Asn300Asp variants.</title>
        <authorList>
            <person name="Lah M.S."/>
            <person name="Palfey B.A."/>
            <person name="Schreuder H.A."/>
            <person name="Ludwig M.L."/>
        </authorList>
    </citation>
    <scope>X-RAY CRYSTALLOGRAPHY (2.10 ANGSTROMS) OF MUTANTS PHE-201; ASP-300 AND PHE-385 IN COMPLEX WITH SUBSTRATE AND FAD</scope>
    <scope>FUNCTION</scope>
    <scope>MUTAGENESIS OF TYR-201; ASN-300 AND TYR-385</scope>
    <scope>COFACTOR</scope>
    <scope>SUBUNIT</scope>
</reference>
<reference key="5">
    <citation type="journal article" date="1994" name="Science">
        <title>The mobile flavin of 4-OH benzoate hydroxylase.</title>
        <authorList>
            <person name="Gatti D.L."/>
            <person name="Palfey B.A."/>
            <person name="Lah M.S."/>
            <person name="Entsch B."/>
            <person name="Massey V."/>
            <person name="Ballou D.P."/>
            <person name="Ludwig M.L."/>
        </authorList>
    </citation>
    <scope>X-RAY CRYSTALLOGRAPHY (2.00 ANGSTROMS) IN COMPLEX WITH SUBSTRATE AND FAD</scope>
    <scope>FUNCTION</scope>
    <scope>COFACTOR</scope>
    <scope>SUBUNIT</scope>
</reference>
<reference key="6">
    <citation type="journal article" date="1996" name="Biochemistry">
        <title>pH-dependent structural changes in the active site of p-hydroxybenzoate hydroxylase point to the importance of proton and water movements during catalysis.</title>
        <authorList>
            <person name="Gatti D.L."/>
            <person name="Entsch B."/>
            <person name="Ballou D.P."/>
            <person name="Ludwig M.L."/>
        </authorList>
    </citation>
    <scope>X-RAY CRYSTALLOGRAPHY (2.00 ANGSTROMS) IN COMPLEX WITH SUBSTRATE ANALOG AND FAD</scope>
    <scope>FUNCTION</scope>
    <scope>COFACTOR</scope>
    <scope>SUBUNIT</scope>
    <scope>REACTION MECHANISM</scope>
</reference>
<reference key="7">
    <citation type="journal article" date="1999" name="Biochemistry">
        <title>Structure-function correlations of the reaction of reduced nicotinamide analogues with p-hydroxybenzoate hydroxylase substituted with a series of 8-substituted flavins.</title>
        <authorList>
            <person name="Ortiz-Maldonado M."/>
            <person name="Gatti D."/>
            <person name="Ballou D.P."/>
            <person name="Massey V."/>
        </authorList>
    </citation>
    <scope>X-RAY CRYSTALLOGRAPHY (2.20 ANGSTROMS) IN COMPLEX WITH SUBSTRATE AND FAD ANALOG</scope>
    <scope>FUNCTION</scope>
    <scope>SUBUNIT</scope>
</reference>
<reference key="8">
    <citation type="journal article" date="2002" name="Proc. Natl. Acad. Sci. U.S.A.">
        <title>Protein and ligand dynamics in 4-hydroxybenzoate hydroxylase.</title>
        <authorList>
            <person name="Wang J."/>
            <person name="Ortiz-Maldonado M."/>
            <person name="Entsch B."/>
            <person name="Massey V."/>
            <person name="Ballou D."/>
            <person name="Gatti D.L."/>
        </authorList>
    </citation>
    <scope>X-RAY CRYSTALLOGRAPHY (1.80 ANGSTROMS) OF MUTANT GLN-220 IN COMPLEX WITH SUBSTRATE AND FAD</scope>
    <scope>FUNCTION</scope>
    <scope>MUTAGENESIS OF ARG-220</scope>
    <scope>COFACTOR</scope>
    <scope>SUBUNIT</scope>
</reference>
<reference key="9">
    <citation type="journal article" date="2005" name="Biochemistry">
        <title>Removal of a methyl group causes global changes in p-hydroxybenzoate hydroxylase.</title>
        <authorList>
            <person name="Cole L.J."/>
            <person name="Gatti D.L."/>
            <person name="Entsch B."/>
            <person name="Ballou D.P."/>
        </authorList>
    </citation>
    <scope>X-RAY CRYSTALLOGRAPHY (2.00 ANGSTROMS) OF WILD-TYPE AND MUTANT GLY-45 IN COMPLEX WITH SUBSTRATE AND FAD</scope>
    <scope>MUTAGENESIS OF ALA-45</scope>
    <scope>FUNCTION</scope>
    <scope>COFACTOR</scope>
    <scope>SUBUNIT</scope>
</reference>
<organism>
    <name type="scientific">Pseudomonas aeruginosa (strain ATCC 15692 / DSM 22644 / CIP 104116 / JCM 14847 / LMG 12228 / 1C / PRS 101 / PAO1)</name>
    <dbReference type="NCBI Taxonomy" id="208964"/>
    <lineage>
        <taxon>Bacteria</taxon>
        <taxon>Pseudomonadati</taxon>
        <taxon>Pseudomonadota</taxon>
        <taxon>Gammaproteobacteria</taxon>
        <taxon>Pseudomonadales</taxon>
        <taxon>Pseudomonadaceae</taxon>
        <taxon>Pseudomonas</taxon>
    </lineage>
</organism>
<gene>
    <name evidence="9" type="primary">pobA</name>
    <name type="ordered locus">PA0247</name>
</gene>
<feature type="chain" id="PRO_0000058381" description="p-hydroxybenzoate hydroxylase">
    <location>
        <begin position="1"/>
        <end position="394"/>
    </location>
</feature>
<feature type="binding site" evidence="1 2 3 5 6 7">
    <location>
        <position position="13"/>
    </location>
    <ligand>
        <name>FAD</name>
        <dbReference type="ChEBI" id="CHEBI:57692"/>
    </ligand>
</feature>
<feature type="binding site" evidence="1 2 3 5 6 7">
    <location>
        <position position="32"/>
    </location>
    <ligand>
        <name>FAD</name>
        <dbReference type="ChEBI" id="CHEBI:57692"/>
    </ligand>
</feature>
<feature type="binding site" evidence="1 2 3 5 6 7">
    <location>
        <begin position="42"/>
        <end position="47"/>
    </location>
    <ligand>
        <name>FAD</name>
        <dbReference type="ChEBI" id="CHEBI:57692"/>
    </ligand>
</feature>
<feature type="binding site" evidence="1 2 3 5 6 7">
    <location>
        <position position="102"/>
    </location>
    <ligand>
        <name>FAD</name>
        <dbReference type="ChEBI" id="CHEBI:57692"/>
    </ligand>
</feature>
<feature type="binding site" evidence="1 2 3 5 6 7">
    <location>
        <position position="201"/>
    </location>
    <ligand>
        <name>substrate</name>
    </ligand>
</feature>
<feature type="binding site" evidence="1 2 3 5 6 7">
    <location>
        <begin position="212"/>
        <end position="214"/>
    </location>
    <ligand>
        <name>substrate</name>
    </ligand>
</feature>
<feature type="binding site" evidence="1 2 3 5 6 7">
    <location>
        <position position="222"/>
    </location>
    <ligand>
        <name>substrate</name>
    </ligand>
</feature>
<feature type="binding site" evidence="1 3 5 6 7">
    <location>
        <position position="286"/>
    </location>
    <ligand>
        <name>FAD</name>
        <dbReference type="ChEBI" id="CHEBI:57692"/>
    </ligand>
</feature>
<feature type="binding site" evidence="1 2 3 5 6 7">
    <location>
        <position position="293"/>
    </location>
    <ligand>
        <name>substrate</name>
    </ligand>
</feature>
<feature type="binding site" evidence="1 2 3 5 6 7">
    <location>
        <begin position="299"/>
        <end position="300"/>
    </location>
    <ligand>
        <name>FAD</name>
        <dbReference type="ChEBI" id="CHEBI:57692"/>
    </ligand>
</feature>
<feature type="site" description="Important for catalytic activity" evidence="6">
    <location>
        <position position="201"/>
    </location>
</feature>
<feature type="site" description="Important for catalytic activity" evidence="6">
    <location>
        <position position="385"/>
    </location>
</feature>
<feature type="mutagenesis site" description="The positions of the substrate and the flavin are not altered." evidence="3">
    <original>A</original>
    <variation>G</variation>
    <location>
        <position position="45"/>
    </location>
</feature>
<feature type="mutagenesis site" description="Reduction of hydroxylase activity." evidence="4 6">
    <original>Y</original>
    <variation>F</variation>
    <location>
        <position position="201"/>
    </location>
</feature>
<feature type="mutagenesis site" description="Lower affinity for p-OHB than the wild-type." evidence="2">
    <original>R</original>
    <variation>Q</variation>
    <location>
        <position position="220"/>
    </location>
</feature>
<feature type="mutagenesis site" description="The side chain of Asp300 moves away from the flavin, disrupting the interactions of the carboxamide group with the flavin O(2) atom, and the alpha-helix H10 that begins at residue 297 is displaced, altering its dipole interactions with the flavin ring." evidence="6">
    <original>N</original>
    <variation>D</variation>
    <location>
        <position position="300"/>
    </location>
</feature>
<feature type="mutagenesis site" description="The positions of the substrate and the flavin are not altered." evidence="4 6">
    <original>Y</original>
    <variation>F</variation>
    <location>
        <position position="385"/>
    </location>
</feature>
<feature type="strand" evidence="11">
    <location>
        <begin position="4"/>
        <end position="8"/>
    </location>
</feature>
<feature type="helix" evidence="11">
    <location>
        <begin position="12"/>
        <end position="23"/>
    </location>
</feature>
<feature type="strand" evidence="11">
    <location>
        <begin position="28"/>
        <end position="31"/>
    </location>
</feature>
<feature type="helix" evidence="11">
    <location>
        <begin position="36"/>
        <end position="40"/>
    </location>
</feature>
<feature type="strand" evidence="11">
    <location>
        <begin position="47"/>
        <end position="49"/>
    </location>
</feature>
<feature type="helix" evidence="11">
    <location>
        <begin position="50"/>
        <end position="58"/>
    </location>
</feature>
<feature type="helix" evidence="11">
    <location>
        <begin position="63"/>
        <end position="68"/>
    </location>
</feature>
<feature type="strand" evidence="11">
    <location>
        <begin position="70"/>
        <end position="72"/>
    </location>
</feature>
<feature type="strand" evidence="11">
    <location>
        <begin position="74"/>
        <end position="79"/>
    </location>
</feature>
<feature type="strand" evidence="11">
    <location>
        <begin position="82"/>
        <end position="87"/>
    </location>
</feature>
<feature type="helix" evidence="11">
    <location>
        <begin position="88"/>
        <end position="91"/>
    </location>
</feature>
<feature type="strand" evidence="11">
    <location>
        <begin position="97"/>
        <end position="99"/>
    </location>
</feature>
<feature type="helix" evidence="11">
    <location>
        <begin position="102"/>
        <end position="116"/>
    </location>
</feature>
<feature type="strand" evidence="11">
    <location>
        <begin position="119"/>
        <end position="123"/>
    </location>
</feature>
<feature type="strand" evidence="11">
    <location>
        <begin position="125"/>
        <end position="130"/>
    </location>
</feature>
<feature type="strand" evidence="11">
    <location>
        <begin position="134"/>
        <end position="136"/>
    </location>
</feature>
<feature type="strand" evidence="11">
    <location>
        <begin position="138"/>
        <end position="143"/>
    </location>
</feature>
<feature type="strand" evidence="11">
    <location>
        <begin position="146"/>
        <end position="151"/>
    </location>
</feature>
<feature type="strand" evidence="11">
    <location>
        <begin position="153"/>
        <end position="157"/>
    </location>
</feature>
<feature type="helix" evidence="11">
    <location>
        <begin position="166"/>
        <end position="168"/>
    </location>
</feature>
<feature type="helix" evidence="11">
    <location>
        <begin position="171"/>
        <end position="173"/>
    </location>
</feature>
<feature type="strand" evidence="11">
    <location>
        <begin position="175"/>
        <end position="192"/>
    </location>
</feature>
<feature type="strand" evidence="11">
    <location>
        <begin position="195"/>
        <end position="198"/>
    </location>
</feature>
<feature type="strand" evidence="11">
    <location>
        <begin position="200"/>
        <end position="202"/>
    </location>
</feature>
<feature type="strand" evidence="11">
    <location>
        <begin position="209"/>
        <end position="215"/>
    </location>
</feature>
<feature type="strand" evidence="11">
    <location>
        <begin position="218"/>
        <end position="225"/>
    </location>
</feature>
<feature type="helix" evidence="11">
    <location>
        <begin position="231"/>
        <end position="233"/>
    </location>
</feature>
<feature type="helix" evidence="11">
    <location>
        <begin position="236"/>
        <end position="245"/>
    </location>
</feature>
<feature type="helix" evidence="11">
    <location>
        <begin position="249"/>
        <end position="252"/>
    </location>
</feature>
<feature type="strand" evidence="11">
    <location>
        <begin position="261"/>
        <end position="278"/>
    </location>
</feature>
<feature type="strand" evidence="11">
    <location>
        <begin position="281"/>
        <end position="283"/>
    </location>
</feature>
<feature type="helix" evidence="11">
    <location>
        <begin position="285"/>
        <end position="287"/>
    </location>
</feature>
<feature type="helix" evidence="11">
    <location>
        <begin position="293"/>
        <end position="295"/>
    </location>
</feature>
<feature type="helix" evidence="11">
    <location>
        <begin position="298"/>
        <end position="319"/>
    </location>
</feature>
<feature type="helix" evidence="11">
    <location>
        <begin position="322"/>
        <end position="327"/>
    </location>
</feature>
<feature type="helix" evidence="11">
    <location>
        <begin position="328"/>
        <end position="350"/>
    </location>
</feature>
<feature type="helix" evidence="11">
    <location>
        <begin position="358"/>
        <end position="373"/>
    </location>
</feature>
<feature type="helix" evidence="11">
    <location>
        <begin position="375"/>
        <end position="386"/>
    </location>
</feature>
<name>PHHY_PSEAE</name>